<reference key="1">
    <citation type="journal article" date="2000" name="Antimicrob. Agents Chemother.">
        <title>Genetic characterization of vanG, a novel vancomycin resistance locus of Enterococcus faecalis.</title>
        <authorList>
            <person name="McKessar S.J."/>
            <person name="Berry A.M."/>
            <person name="Bell J.M."/>
            <person name="Turnidge J.D."/>
            <person name="Paton J.C."/>
        </authorList>
    </citation>
    <scope>NUCLEOTIDE SEQUENCE [GENOMIC DNA]</scope>
    <source>
        <strain>WCH9</strain>
    </source>
</reference>
<protein>
    <recommendedName>
        <fullName>Amino-acid racemase</fullName>
        <ecNumber>5.1.1.-</ecNumber>
    </recommendedName>
    <alternativeName>
        <fullName>Vancomycin G-type resistance protein VanT</fullName>
    </alternativeName>
</protein>
<proteinExistence type="inferred from homology"/>
<comment type="cofactor">
    <cofactor evidence="1">
        <name>pyridoxal 5'-phosphate</name>
        <dbReference type="ChEBI" id="CHEBI:597326"/>
    </cofactor>
</comment>
<comment type="subcellular location">
    <subcellularLocation>
        <location evidence="3">Cell membrane</location>
        <topology evidence="3">Multi-pass membrane protein</topology>
    </subcellularLocation>
</comment>
<comment type="similarity">
    <text evidence="3">In the N-terminal section; belongs to the acyltransferase 3 family.</text>
</comment>
<comment type="similarity">
    <text evidence="3">In the C-terminal section; belongs to the alanine racemase family.</text>
</comment>
<keyword id="KW-0046">Antibiotic resistance</keyword>
<keyword id="KW-1003">Cell membrane</keyword>
<keyword id="KW-0413">Isomerase</keyword>
<keyword id="KW-0472">Membrane</keyword>
<keyword id="KW-0663">Pyridoxal phosphate</keyword>
<keyword id="KW-0812">Transmembrane</keyword>
<keyword id="KW-1133">Transmembrane helix</keyword>
<organism>
    <name type="scientific">Enterococcus faecalis</name>
    <name type="common">Streptococcus faecalis</name>
    <dbReference type="NCBI Taxonomy" id="1351"/>
    <lineage>
        <taxon>Bacteria</taxon>
        <taxon>Bacillati</taxon>
        <taxon>Bacillota</taxon>
        <taxon>Bacilli</taxon>
        <taxon>Lactobacillales</taxon>
        <taxon>Enterococcaceae</taxon>
        <taxon>Enterococcus</taxon>
    </lineage>
</organism>
<dbReference type="EC" id="5.1.1.-"/>
<dbReference type="EMBL" id="AF253562">
    <property type="protein sequence ID" value="AAF71283.1"/>
    <property type="molecule type" value="Genomic_DNA"/>
</dbReference>
<dbReference type="RefSeq" id="WP_063856752.1">
    <property type="nucleotide sequence ID" value="NG_048455.1"/>
</dbReference>
<dbReference type="SMR" id="Q9KHL7"/>
<dbReference type="GO" id="GO:0005829">
    <property type="term" value="C:cytosol"/>
    <property type="evidence" value="ECO:0007669"/>
    <property type="project" value="TreeGrafter"/>
</dbReference>
<dbReference type="GO" id="GO:0005886">
    <property type="term" value="C:plasma membrane"/>
    <property type="evidence" value="ECO:0007669"/>
    <property type="project" value="UniProtKB-SubCell"/>
</dbReference>
<dbReference type="GO" id="GO:0016747">
    <property type="term" value="F:acyltransferase activity, transferring groups other than amino-acyl groups"/>
    <property type="evidence" value="ECO:0007669"/>
    <property type="project" value="InterPro"/>
</dbReference>
<dbReference type="GO" id="GO:0008784">
    <property type="term" value="F:alanine racemase activity"/>
    <property type="evidence" value="ECO:0007669"/>
    <property type="project" value="UniProtKB-UniRule"/>
</dbReference>
<dbReference type="GO" id="GO:0030170">
    <property type="term" value="F:pyridoxal phosphate binding"/>
    <property type="evidence" value="ECO:0007669"/>
    <property type="project" value="UniProtKB-UniRule"/>
</dbReference>
<dbReference type="GO" id="GO:0030632">
    <property type="term" value="P:D-alanine biosynthetic process"/>
    <property type="evidence" value="ECO:0007669"/>
    <property type="project" value="UniProtKB-UniRule"/>
</dbReference>
<dbReference type="GO" id="GO:0046677">
    <property type="term" value="P:response to antibiotic"/>
    <property type="evidence" value="ECO:0007669"/>
    <property type="project" value="UniProtKB-KW"/>
</dbReference>
<dbReference type="FunFam" id="3.20.20.10:FF:000002">
    <property type="entry name" value="Alanine racemase"/>
    <property type="match status" value="1"/>
</dbReference>
<dbReference type="Gene3D" id="3.20.20.10">
    <property type="entry name" value="Alanine racemase"/>
    <property type="match status" value="1"/>
</dbReference>
<dbReference type="Gene3D" id="2.40.37.10">
    <property type="entry name" value="Lyase, Ornithine Decarboxylase, Chain A, domain 1"/>
    <property type="match status" value="1"/>
</dbReference>
<dbReference type="HAMAP" id="MF_01201">
    <property type="entry name" value="Ala_racemase"/>
    <property type="match status" value="1"/>
</dbReference>
<dbReference type="InterPro" id="IPR002656">
    <property type="entry name" value="Acyl_transf_3_dom"/>
</dbReference>
<dbReference type="InterPro" id="IPR000821">
    <property type="entry name" value="Ala_racemase"/>
</dbReference>
<dbReference type="InterPro" id="IPR009006">
    <property type="entry name" value="Ala_racemase/Decarboxylase_C"/>
</dbReference>
<dbReference type="InterPro" id="IPR011079">
    <property type="entry name" value="Ala_racemase_C"/>
</dbReference>
<dbReference type="InterPro" id="IPR001608">
    <property type="entry name" value="Ala_racemase_N"/>
</dbReference>
<dbReference type="InterPro" id="IPR020622">
    <property type="entry name" value="Ala_racemase_pyridoxalP-BS"/>
</dbReference>
<dbReference type="InterPro" id="IPR029066">
    <property type="entry name" value="PLP-binding_barrel"/>
</dbReference>
<dbReference type="InterPro" id="IPR011248">
    <property type="entry name" value="Serine/alanine_racemase"/>
</dbReference>
<dbReference type="NCBIfam" id="TIGR00492">
    <property type="entry name" value="alr"/>
    <property type="match status" value="1"/>
</dbReference>
<dbReference type="NCBIfam" id="NF033131">
    <property type="entry name" value="vanT-G-Cterm"/>
    <property type="match status" value="1"/>
</dbReference>
<dbReference type="PANTHER" id="PTHR30511">
    <property type="entry name" value="ALANINE RACEMASE"/>
    <property type="match status" value="1"/>
</dbReference>
<dbReference type="PANTHER" id="PTHR30511:SF0">
    <property type="entry name" value="ALANINE RACEMASE, CATABOLIC-RELATED"/>
    <property type="match status" value="1"/>
</dbReference>
<dbReference type="Pfam" id="PF01757">
    <property type="entry name" value="Acyl_transf_3"/>
    <property type="match status" value="1"/>
</dbReference>
<dbReference type="Pfam" id="PF00842">
    <property type="entry name" value="Ala_racemase_C"/>
    <property type="match status" value="1"/>
</dbReference>
<dbReference type="Pfam" id="PF01168">
    <property type="entry name" value="Ala_racemase_N"/>
    <property type="match status" value="1"/>
</dbReference>
<dbReference type="PIRSF" id="PIRSF036464">
    <property type="entry name" value="Ser_ala_racem"/>
    <property type="match status" value="1"/>
</dbReference>
<dbReference type="PRINTS" id="PR00992">
    <property type="entry name" value="ALARACEMASE"/>
</dbReference>
<dbReference type="SMART" id="SM01005">
    <property type="entry name" value="Ala_racemase_C"/>
    <property type="match status" value="1"/>
</dbReference>
<dbReference type="SUPFAM" id="SSF50621">
    <property type="entry name" value="Alanine racemase C-terminal domain-like"/>
    <property type="match status" value="1"/>
</dbReference>
<dbReference type="SUPFAM" id="SSF51419">
    <property type="entry name" value="PLP-binding barrel"/>
    <property type="match status" value="1"/>
</dbReference>
<dbReference type="PROSITE" id="PS00395">
    <property type="entry name" value="ALANINE_RACEMASE"/>
    <property type="match status" value="1"/>
</dbReference>
<evidence type="ECO:0000250" key="1"/>
<evidence type="ECO:0000255" key="2"/>
<evidence type="ECO:0000305" key="3"/>
<accession>Q9KHL7</accession>
<sequence>MTKNESYSGIDYFRFIAALLIVAIHTSPLFSFSETGNFIFTRIVAPVAVPFFFMTSGFFLISRYTCNAEKLGAFIKKTTLIYGVAILLYIPINVYNGYFKMDNLLPNIIKDIVFDGTLYHLWYLPASIIGAAIAWYLVKKVHYRKAFLIASILYIIGLFGDSYYGIVKSVSCLNVFYNLIFQLTDYTRNGIFFAPIFFVLGGYISDSPNRYRKKNYIRIYSLFCLMFGKTLTLQHFDIQKHDSMYVLLLPSVWCLFNLLLHFRGKRRTGLRTISLDQLYHSSVYDCCNTIVCAELLHLQSLLVENSLVHYIAVCFASVVLAVVITALLSSLKPKKAKHTADTDRAYLEINLNNLEHNVNTLQKAMSPKCELMAVVKAEAYGHGMYEVTTYFEPIGVFYLAVATIDEGIRLRKYGIFSEILILGYTSPSRAKELCKFELTQTLIDYRYLLLLNKQGYDIKAHIKIDTGMHRLGFSTEDKDKILAAFFLKHIKVAGIFTHLCAADSLEEKEVAFTNKPIGSFYKVLDWPKSSGLNIPKVNIQTSYGLWNIQSWNVIYQSGVALYGVLRSTNDKTKLETDLRACSFLKAKVVLIRKIKQGGSVGYSRAFTATRDSLIAILPIGYADGFPRNLSCGNSYVLIGGRQAPIVGKICMDQLAVDVTDIPNVKTGSIATLIGKDGKEEITAPMVAESAESITNELLSRMEHRLNIIRRA</sequence>
<feature type="chain" id="PRO_0000114607" description="Amino-acid racemase">
    <location>
        <begin position="1"/>
        <end position="711"/>
    </location>
</feature>
<feature type="topological domain" description="Cytoplasmic" evidence="2">
    <location>
        <begin position="1"/>
        <end position="14"/>
    </location>
</feature>
<feature type="transmembrane region" description="Helical" evidence="2">
    <location>
        <begin position="15"/>
        <end position="35"/>
    </location>
</feature>
<feature type="topological domain" description="Extracellular" evidence="2">
    <location>
        <begin position="36"/>
        <end position="37"/>
    </location>
</feature>
<feature type="transmembrane region" description="Helical" evidence="2">
    <location>
        <begin position="38"/>
        <end position="58"/>
    </location>
</feature>
<feature type="topological domain" description="Cytoplasmic" evidence="2">
    <location>
        <begin position="59"/>
        <end position="78"/>
    </location>
</feature>
<feature type="transmembrane region" description="Helical" evidence="2">
    <location>
        <begin position="79"/>
        <end position="99"/>
    </location>
</feature>
<feature type="topological domain" description="Extracellular" evidence="2">
    <location>
        <begin position="100"/>
        <end position="117"/>
    </location>
</feature>
<feature type="transmembrane region" description="Helical" evidence="2">
    <location>
        <begin position="118"/>
        <end position="138"/>
    </location>
</feature>
<feature type="topological domain" description="Cytoplasmic" evidence="2">
    <location>
        <begin position="139"/>
        <end position="146"/>
    </location>
</feature>
<feature type="transmembrane region" description="Helical" evidence="2">
    <location>
        <begin position="147"/>
        <end position="167"/>
    </location>
</feature>
<feature type="topological domain" description="Extracellular" evidence="2">
    <location>
        <begin position="168"/>
        <end position="188"/>
    </location>
</feature>
<feature type="transmembrane region" description="Helical" evidence="2">
    <location>
        <begin position="189"/>
        <end position="209"/>
    </location>
</feature>
<feature type="topological domain" description="Cytoplasmic" evidence="2">
    <location>
        <begin position="210"/>
        <end position="241"/>
    </location>
</feature>
<feature type="transmembrane region" description="Helical" evidence="2">
    <location>
        <begin position="242"/>
        <end position="262"/>
    </location>
</feature>
<feature type="topological domain" description="Extracellular" evidence="2">
    <location>
        <begin position="263"/>
        <end position="306"/>
    </location>
</feature>
<feature type="transmembrane region" description="Helical" evidence="2">
    <location>
        <begin position="307"/>
        <end position="327"/>
    </location>
</feature>
<feature type="topological domain" description="Cytoplasmic" evidence="2">
    <location>
        <begin position="328"/>
        <end position="711"/>
    </location>
</feature>
<feature type="region of interest" description="Racemase">
    <location>
        <begin position="336"/>
        <end position="711"/>
    </location>
</feature>
<feature type="active site" description="Proton acceptor" evidence="1">
    <location>
        <position position="376"/>
    </location>
</feature>
<feature type="active site" description="Proton acceptor" evidence="1">
    <location>
        <position position="602"/>
    </location>
</feature>
<feature type="binding site" evidence="1">
    <location>
        <position position="470"/>
    </location>
    <ligand>
        <name>substrate</name>
    </ligand>
</feature>
<feature type="binding site" evidence="1">
    <location>
        <position position="651"/>
    </location>
    <ligand>
        <name>substrate</name>
    </ligand>
</feature>
<feature type="modified residue" description="N6-(pyridoxal phosphate)lysine" evidence="1">
    <location>
        <position position="376"/>
    </location>
</feature>
<gene>
    <name type="primary">vanTG</name>
</gene>
<name>VANTG_ENTFL</name>